<accession>Q8F0S9</accession>
<comment type="function">
    <text evidence="1">Catalyzes the ATP-dependent phosphorylation of thiamine-monophosphate (TMP) to form thiamine-pyrophosphate (TPP), the active form of vitamin B1.</text>
</comment>
<comment type="catalytic activity">
    <reaction evidence="1">
        <text>thiamine phosphate + ATP = thiamine diphosphate + ADP</text>
        <dbReference type="Rhea" id="RHEA:15913"/>
        <dbReference type="ChEBI" id="CHEBI:30616"/>
        <dbReference type="ChEBI" id="CHEBI:37575"/>
        <dbReference type="ChEBI" id="CHEBI:58937"/>
        <dbReference type="ChEBI" id="CHEBI:456216"/>
        <dbReference type="EC" id="2.7.4.16"/>
    </reaction>
</comment>
<comment type="pathway">
    <text evidence="1">Cofactor biosynthesis; thiamine diphosphate biosynthesis; thiamine diphosphate from thiamine phosphate: step 1/1.</text>
</comment>
<comment type="miscellaneous">
    <text evidence="1">Reaction mechanism of ThiL seems to utilize a direct, inline transfer of the gamma-phosphate of ATP to TMP rather than a phosphorylated enzyme intermediate.</text>
</comment>
<comment type="similarity">
    <text evidence="1">Belongs to the thiamine-monophosphate kinase family.</text>
</comment>
<feature type="chain" id="PRO_0000415638" description="Thiamine-monophosphate kinase">
    <location>
        <begin position="1"/>
        <end position="307"/>
    </location>
</feature>
<feature type="binding site" evidence="1">
    <location>
        <position position="26"/>
    </location>
    <ligand>
        <name>Mg(2+)</name>
        <dbReference type="ChEBI" id="CHEBI:18420"/>
        <label>3</label>
    </ligand>
</feature>
<feature type="binding site" evidence="1">
    <location>
        <position position="26"/>
    </location>
    <ligand>
        <name>Mg(2+)</name>
        <dbReference type="ChEBI" id="CHEBI:18420"/>
        <label>4</label>
    </ligand>
</feature>
<feature type="binding site" evidence="1">
    <location>
        <position position="37"/>
    </location>
    <ligand>
        <name>Mg(2+)</name>
        <dbReference type="ChEBI" id="CHEBI:18420"/>
        <label>4</label>
    </ligand>
</feature>
<feature type="binding site" evidence="1">
    <location>
        <position position="38"/>
    </location>
    <ligand>
        <name>Mg(2+)</name>
        <dbReference type="ChEBI" id="CHEBI:18420"/>
        <label>1</label>
    </ligand>
</feature>
<feature type="binding site" evidence="1">
    <location>
        <position position="39"/>
    </location>
    <ligand>
        <name>Mg(2+)</name>
        <dbReference type="ChEBI" id="CHEBI:18420"/>
        <label>1</label>
    </ligand>
</feature>
<feature type="binding site" evidence="1">
    <location>
        <position position="39"/>
    </location>
    <ligand>
        <name>Mg(2+)</name>
        <dbReference type="ChEBI" id="CHEBI:18420"/>
        <label>2</label>
    </ligand>
</feature>
<feature type="binding site" evidence="1">
    <location>
        <position position="46"/>
    </location>
    <ligand>
        <name>substrate</name>
    </ligand>
</feature>
<feature type="binding site" evidence="1">
    <location>
        <position position="68"/>
    </location>
    <ligand>
        <name>Mg(2+)</name>
        <dbReference type="ChEBI" id="CHEBI:18420"/>
        <label>2</label>
    </ligand>
</feature>
<feature type="binding site" evidence="1">
    <location>
        <position position="68"/>
    </location>
    <ligand>
        <name>Mg(2+)</name>
        <dbReference type="ChEBI" id="CHEBI:18420"/>
        <label>3</label>
    </ligand>
</feature>
<feature type="binding site" evidence="1">
    <location>
        <position position="68"/>
    </location>
    <ligand>
        <name>Mg(2+)</name>
        <dbReference type="ChEBI" id="CHEBI:18420"/>
        <label>4</label>
    </ligand>
</feature>
<feature type="binding site" evidence="1">
    <location>
        <begin position="116"/>
        <end position="117"/>
    </location>
    <ligand>
        <name>ATP</name>
        <dbReference type="ChEBI" id="CHEBI:30616"/>
    </ligand>
</feature>
<feature type="binding site" evidence="1">
    <location>
        <position position="117"/>
    </location>
    <ligand>
        <name>Mg(2+)</name>
        <dbReference type="ChEBI" id="CHEBI:18420"/>
        <label>1</label>
    </ligand>
</feature>
<feature type="binding site" evidence="1">
    <location>
        <position position="140"/>
    </location>
    <ligand>
        <name>ATP</name>
        <dbReference type="ChEBI" id="CHEBI:30616"/>
    </ligand>
</feature>
<feature type="binding site" evidence="1">
    <location>
        <position position="207"/>
    </location>
    <ligand>
        <name>Mg(2+)</name>
        <dbReference type="ChEBI" id="CHEBI:18420"/>
        <label>3</label>
    </ligand>
</feature>
<feature type="binding site" evidence="1">
    <location>
        <position position="209"/>
    </location>
    <ligand>
        <name>ATP</name>
        <dbReference type="ChEBI" id="CHEBI:30616"/>
    </ligand>
</feature>
<feature type="binding site" evidence="1">
    <location>
        <position position="210"/>
    </location>
    <ligand>
        <name>Mg(2+)</name>
        <dbReference type="ChEBI" id="CHEBI:18420"/>
        <label>5</label>
    </ligand>
</feature>
<feature type="binding site" evidence="1">
    <location>
        <position position="254"/>
    </location>
    <ligand>
        <name>substrate</name>
    </ligand>
</feature>
<feature type="binding site" evidence="1">
    <location>
        <position position="304"/>
    </location>
    <ligand>
        <name>substrate</name>
    </ligand>
</feature>
<reference key="1">
    <citation type="journal article" date="2003" name="Nature">
        <title>Unique physiological and pathogenic features of Leptospira interrogans revealed by whole-genome sequencing.</title>
        <authorList>
            <person name="Ren S.-X."/>
            <person name="Fu G."/>
            <person name="Jiang X.-G."/>
            <person name="Zeng R."/>
            <person name="Miao Y.-G."/>
            <person name="Xu H."/>
            <person name="Zhang Y.-X."/>
            <person name="Xiong H."/>
            <person name="Lu G."/>
            <person name="Lu L.-F."/>
            <person name="Jiang H.-Q."/>
            <person name="Jia J."/>
            <person name="Tu Y.-F."/>
            <person name="Jiang J.-X."/>
            <person name="Gu W.-Y."/>
            <person name="Zhang Y.-Q."/>
            <person name="Cai Z."/>
            <person name="Sheng H.-H."/>
            <person name="Yin H.-F."/>
            <person name="Zhang Y."/>
            <person name="Zhu G.-F."/>
            <person name="Wan M."/>
            <person name="Huang H.-L."/>
            <person name="Qian Z."/>
            <person name="Wang S.-Y."/>
            <person name="Ma W."/>
            <person name="Yao Z.-J."/>
            <person name="Shen Y."/>
            <person name="Qiang B.-Q."/>
            <person name="Xia Q.-C."/>
            <person name="Guo X.-K."/>
            <person name="Danchin A."/>
            <person name="Saint Girons I."/>
            <person name="Somerville R.L."/>
            <person name="Wen Y.-M."/>
            <person name="Shi M.-H."/>
            <person name="Chen Z."/>
            <person name="Xu J.-G."/>
            <person name="Zhao G.-P."/>
        </authorList>
    </citation>
    <scope>NUCLEOTIDE SEQUENCE [LARGE SCALE GENOMIC DNA]</scope>
    <source>
        <strain>56601</strain>
    </source>
</reference>
<organism>
    <name type="scientific">Leptospira interrogans serogroup Icterohaemorrhagiae serovar Lai (strain 56601)</name>
    <dbReference type="NCBI Taxonomy" id="189518"/>
    <lineage>
        <taxon>Bacteria</taxon>
        <taxon>Pseudomonadati</taxon>
        <taxon>Spirochaetota</taxon>
        <taxon>Spirochaetia</taxon>
        <taxon>Leptospirales</taxon>
        <taxon>Leptospiraceae</taxon>
        <taxon>Leptospira</taxon>
    </lineage>
</organism>
<protein>
    <recommendedName>
        <fullName evidence="1">Thiamine-monophosphate kinase</fullName>
        <shortName evidence="1">TMP kinase</shortName>
        <shortName evidence="1">Thiamine-phosphate kinase</shortName>
        <ecNumber evidence="1">2.7.4.16</ecNumber>
    </recommendedName>
</protein>
<dbReference type="EC" id="2.7.4.16" evidence="1"/>
<dbReference type="EMBL" id="AE010300">
    <property type="protein sequence ID" value="AAN50610.1"/>
    <property type="molecule type" value="Genomic_DNA"/>
</dbReference>
<dbReference type="RefSeq" id="NP_713592.1">
    <property type="nucleotide sequence ID" value="NC_004342.2"/>
</dbReference>
<dbReference type="RefSeq" id="WP_000662272.1">
    <property type="nucleotide sequence ID" value="NC_004342.2"/>
</dbReference>
<dbReference type="SMR" id="Q8F0S9"/>
<dbReference type="FunCoup" id="Q8F0S9">
    <property type="interactions" value="332"/>
</dbReference>
<dbReference type="STRING" id="189518.LA_3412"/>
<dbReference type="PaxDb" id="189518-LA_3412"/>
<dbReference type="EnsemblBacteria" id="AAN50610">
    <property type="protein sequence ID" value="AAN50610"/>
    <property type="gene ID" value="LA_3412"/>
</dbReference>
<dbReference type="GeneID" id="61144100"/>
<dbReference type="KEGG" id="lil:LA_3412"/>
<dbReference type="PATRIC" id="fig|189518.3.peg.3378"/>
<dbReference type="HOGENOM" id="CLU_046964_1_1_12"/>
<dbReference type="InParanoid" id="Q8F0S9"/>
<dbReference type="OrthoDB" id="9802811at2"/>
<dbReference type="UniPathway" id="UPA00060">
    <property type="reaction ID" value="UER00142"/>
</dbReference>
<dbReference type="Proteomes" id="UP000001408">
    <property type="component" value="Chromosome I"/>
</dbReference>
<dbReference type="GO" id="GO:0005524">
    <property type="term" value="F:ATP binding"/>
    <property type="evidence" value="ECO:0007669"/>
    <property type="project" value="UniProtKB-UniRule"/>
</dbReference>
<dbReference type="GO" id="GO:0000287">
    <property type="term" value="F:magnesium ion binding"/>
    <property type="evidence" value="ECO:0007669"/>
    <property type="project" value="UniProtKB-UniRule"/>
</dbReference>
<dbReference type="GO" id="GO:0009030">
    <property type="term" value="F:thiamine-phosphate kinase activity"/>
    <property type="evidence" value="ECO:0000318"/>
    <property type="project" value="GO_Central"/>
</dbReference>
<dbReference type="GO" id="GO:0009228">
    <property type="term" value="P:thiamine biosynthetic process"/>
    <property type="evidence" value="ECO:0000318"/>
    <property type="project" value="GO_Central"/>
</dbReference>
<dbReference type="GO" id="GO:0009229">
    <property type="term" value="P:thiamine diphosphate biosynthetic process"/>
    <property type="evidence" value="ECO:0000318"/>
    <property type="project" value="GO_Central"/>
</dbReference>
<dbReference type="CDD" id="cd02194">
    <property type="entry name" value="ThiL"/>
    <property type="match status" value="1"/>
</dbReference>
<dbReference type="Gene3D" id="3.90.650.10">
    <property type="entry name" value="PurM-like C-terminal domain"/>
    <property type="match status" value="1"/>
</dbReference>
<dbReference type="Gene3D" id="3.30.1330.10">
    <property type="entry name" value="PurM-like, N-terminal domain"/>
    <property type="match status" value="1"/>
</dbReference>
<dbReference type="HAMAP" id="MF_02128">
    <property type="entry name" value="TMP_kinase"/>
    <property type="match status" value="1"/>
</dbReference>
<dbReference type="InterPro" id="IPR010918">
    <property type="entry name" value="PurM-like_C_dom"/>
</dbReference>
<dbReference type="InterPro" id="IPR036676">
    <property type="entry name" value="PurM-like_C_sf"/>
</dbReference>
<dbReference type="InterPro" id="IPR016188">
    <property type="entry name" value="PurM-like_N"/>
</dbReference>
<dbReference type="InterPro" id="IPR036921">
    <property type="entry name" value="PurM-like_N_sf"/>
</dbReference>
<dbReference type="InterPro" id="IPR006283">
    <property type="entry name" value="ThiL-like"/>
</dbReference>
<dbReference type="NCBIfam" id="TIGR01379">
    <property type="entry name" value="thiL"/>
    <property type="match status" value="1"/>
</dbReference>
<dbReference type="PANTHER" id="PTHR30270">
    <property type="entry name" value="THIAMINE-MONOPHOSPHATE KINASE"/>
    <property type="match status" value="1"/>
</dbReference>
<dbReference type="PANTHER" id="PTHR30270:SF0">
    <property type="entry name" value="THIAMINE-MONOPHOSPHATE KINASE"/>
    <property type="match status" value="1"/>
</dbReference>
<dbReference type="Pfam" id="PF00586">
    <property type="entry name" value="AIRS"/>
    <property type="match status" value="1"/>
</dbReference>
<dbReference type="Pfam" id="PF02769">
    <property type="entry name" value="AIRS_C"/>
    <property type="match status" value="1"/>
</dbReference>
<dbReference type="PIRSF" id="PIRSF005303">
    <property type="entry name" value="Thiam_monoph_kin"/>
    <property type="match status" value="1"/>
</dbReference>
<dbReference type="SUPFAM" id="SSF56042">
    <property type="entry name" value="PurM C-terminal domain-like"/>
    <property type="match status" value="1"/>
</dbReference>
<dbReference type="SUPFAM" id="SSF55326">
    <property type="entry name" value="PurM N-terminal domain-like"/>
    <property type="match status" value="1"/>
</dbReference>
<name>THIL_LEPIN</name>
<keyword id="KW-0067">ATP-binding</keyword>
<keyword id="KW-0418">Kinase</keyword>
<keyword id="KW-0460">Magnesium</keyword>
<keyword id="KW-0479">Metal-binding</keyword>
<keyword id="KW-0547">Nucleotide-binding</keyword>
<keyword id="KW-1185">Reference proteome</keyword>
<keyword id="KW-0784">Thiamine biosynthesis</keyword>
<keyword id="KW-0808">Transferase</keyword>
<proteinExistence type="inferred from homology"/>
<sequence>MKENLILKESEVIRILYPPGIVQTDDCYLDEEGRIYTTDTICEGTHFRIEWSGPKEIAQKLVEVNVSDIAAGGGIPTKAFLNLGLSTQCSKEEWILPFSISLQESLSSYNIELCGGDTYRSSSLNLTLTLIGVTTKPWKRSGGKDGDFLYLTGSVGLSLLGYKILKEGLDIPEPLRSLALERHLTPKARLKVSKELSKNSPVSCCMDLTDGLLLDLPKLASSSNLGLKIDLEKIPILSNILTYLSLGEVLSSGEELELIFLSPVELPKTLCETSLTKIGNTTSDWKGVKFFQGNSEKTFEHLGFEHF</sequence>
<evidence type="ECO:0000255" key="1">
    <source>
        <dbReference type="HAMAP-Rule" id="MF_02128"/>
    </source>
</evidence>
<gene>
    <name evidence="1" type="primary">thiL</name>
    <name type="ordered locus">LA_3412</name>
</gene>